<dbReference type="EC" id="6.1.1.22" evidence="1"/>
<dbReference type="EMBL" id="BA000037">
    <property type="protein sequence ID" value="BAC94854.1"/>
    <property type="molecule type" value="Genomic_DNA"/>
</dbReference>
<dbReference type="RefSeq" id="WP_011080125.1">
    <property type="nucleotide sequence ID" value="NC_005139.1"/>
</dbReference>
<dbReference type="SMR" id="Q7MJS0"/>
<dbReference type="STRING" id="672.VV93_v1c18540"/>
<dbReference type="KEGG" id="vvy:VV2090"/>
<dbReference type="PATRIC" id="fig|196600.6.peg.2116"/>
<dbReference type="eggNOG" id="COG0017">
    <property type="taxonomic scope" value="Bacteria"/>
</dbReference>
<dbReference type="HOGENOM" id="CLU_004553_2_0_6"/>
<dbReference type="Proteomes" id="UP000002675">
    <property type="component" value="Chromosome I"/>
</dbReference>
<dbReference type="GO" id="GO:0005737">
    <property type="term" value="C:cytoplasm"/>
    <property type="evidence" value="ECO:0007669"/>
    <property type="project" value="UniProtKB-SubCell"/>
</dbReference>
<dbReference type="GO" id="GO:0004816">
    <property type="term" value="F:asparagine-tRNA ligase activity"/>
    <property type="evidence" value="ECO:0007669"/>
    <property type="project" value="UniProtKB-UniRule"/>
</dbReference>
<dbReference type="GO" id="GO:0005524">
    <property type="term" value="F:ATP binding"/>
    <property type="evidence" value="ECO:0007669"/>
    <property type="project" value="UniProtKB-UniRule"/>
</dbReference>
<dbReference type="GO" id="GO:0003676">
    <property type="term" value="F:nucleic acid binding"/>
    <property type="evidence" value="ECO:0007669"/>
    <property type="project" value="InterPro"/>
</dbReference>
<dbReference type="GO" id="GO:0006421">
    <property type="term" value="P:asparaginyl-tRNA aminoacylation"/>
    <property type="evidence" value="ECO:0007669"/>
    <property type="project" value="UniProtKB-UniRule"/>
</dbReference>
<dbReference type="CDD" id="cd00776">
    <property type="entry name" value="AsxRS_core"/>
    <property type="match status" value="1"/>
</dbReference>
<dbReference type="CDD" id="cd04318">
    <property type="entry name" value="EcAsnRS_like_N"/>
    <property type="match status" value="1"/>
</dbReference>
<dbReference type="FunFam" id="3.30.930.10:FF:000016">
    <property type="entry name" value="Asparagine--tRNA ligase"/>
    <property type="match status" value="1"/>
</dbReference>
<dbReference type="Gene3D" id="3.30.930.10">
    <property type="entry name" value="Bira Bifunctional Protein, Domain 2"/>
    <property type="match status" value="1"/>
</dbReference>
<dbReference type="Gene3D" id="2.40.50.140">
    <property type="entry name" value="Nucleic acid-binding proteins"/>
    <property type="match status" value="1"/>
</dbReference>
<dbReference type="HAMAP" id="MF_00534">
    <property type="entry name" value="Asn_tRNA_synth"/>
    <property type="match status" value="1"/>
</dbReference>
<dbReference type="InterPro" id="IPR004364">
    <property type="entry name" value="Aa-tRNA-synt_II"/>
</dbReference>
<dbReference type="InterPro" id="IPR006195">
    <property type="entry name" value="aa-tRNA-synth_II"/>
</dbReference>
<dbReference type="InterPro" id="IPR045864">
    <property type="entry name" value="aa-tRNA-synth_II/BPL/LPL"/>
</dbReference>
<dbReference type="InterPro" id="IPR004522">
    <property type="entry name" value="Asn-tRNA-ligase"/>
</dbReference>
<dbReference type="InterPro" id="IPR002312">
    <property type="entry name" value="Asp/Asn-tRNA-synth_IIb"/>
</dbReference>
<dbReference type="InterPro" id="IPR012340">
    <property type="entry name" value="NA-bd_OB-fold"/>
</dbReference>
<dbReference type="InterPro" id="IPR004365">
    <property type="entry name" value="NA-bd_OB_tRNA"/>
</dbReference>
<dbReference type="NCBIfam" id="TIGR00457">
    <property type="entry name" value="asnS"/>
    <property type="match status" value="1"/>
</dbReference>
<dbReference type="NCBIfam" id="NF003037">
    <property type="entry name" value="PRK03932.1"/>
    <property type="match status" value="1"/>
</dbReference>
<dbReference type="PANTHER" id="PTHR22594:SF34">
    <property type="entry name" value="ASPARAGINE--TRNA LIGASE, MITOCHONDRIAL-RELATED"/>
    <property type="match status" value="1"/>
</dbReference>
<dbReference type="PANTHER" id="PTHR22594">
    <property type="entry name" value="ASPARTYL/LYSYL-TRNA SYNTHETASE"/>
    <property type="match status" value="1"/>
</dbReference>
<dbReference type="Pfam" id="PF00152">
    <property type="entry name" value="tRNA-synt_2"/>
    <property type="match status" value="1"/>
</dbReference>
<dbReference type="Pfam" id="PF01336">
    <property type="entry name" value="tRNA_anti-codon"/>
    <property type="match status" value="1"/>
</dbReference>
<dbReference type="PRINTS" id="PR01042">
    <property type="entry name" value="TRNASYNTHASP"/>
</dbReference>
<dbReference type="SUPFAM" id="SSF55681">
    <property type="entry name" value="Class II aaRS and biotin synthetases"/>
    <property type="match status" value="1"/>
</dbReference>
<dbReference type="SUPFAM" id="SSF50249">
    <property type="entry name" value="Nucleic acid-binding proteins"/>
    <property type="match status" value="1"/>
</dbReference>
<dbReference type="PROSITE" id="PS50862">
    <property type="entry name" value="AA_TRNA_LIGASE_II"/>
    <property type="match status" value="1"/>
</dbReference>
<reference key="1">
    <citation type="journal article" date="2003" name="Genome Res.">
        <title>Comparative genome analysis of Vibrio vulnificus, a marine pathogen.</title>
        <authorList>
            <person name="Chen C.-Y."/>
            <person name="Wu K.-M."/>
            <person name="Chang Y.-C."/>
            <person name="Chang C.-H."/>
            <person name="Tsai H.-C."/>
            <person name="Liao T.-L."/>
            <person name="Liu Y.-M."/>
            <person name="Chen H.-J."/>
            <person name="Shen A.B.-T."/>
            <person name="Li J.-C."/>
            <person name="Su T.-L."/>
            <person name="Shao C.-P."/>
            <person name="Lee C.-T."/>
            <person name="Hor L.-I."/>
            <person name="Tsai S.-F."/>
        </authorList>
    </citation>
    <scope>NUCLEOTIDE SEQUENCE [LARGE SCALE GENOMIC DNA]</scope>
    <source>
        <strain>YJ016</strain>
    </source>
</reference>
<organism>
    <name type="scientific">Vibrio vulnificus (strain YJ016)</name>
    <dbReference type="NCBI Taxonomy" id="196600"/>
    <lineage>
        <taxon>Bacteria</taxon>
        <taxon>Pseudomonadati</taxon>
        <taxon>Pseudomonadota</taxon>
        <taxon>Gammaproteobacteria</taxon>
        <taxon>Vibrionales</taxon>
        <taxon>Vibrionaceae</taxon>
        <taxon>Vibrio</taxon>
    </lineage>
</organism>
<feature type="chain" id="PRO_0000176477" description="Asparagine--tRNA ligase">
    <location>
        <begin position="1"/>
        <end position="466"/>
    </location>
</feature>
<comment type="catalytic activity">
    <reaction evidence="1">
        <text>tRNA(Asn) + L-asparagine + ATP = L-asparaginyl-tRNA(Asn) + AMP + diphosphate + H(+)</text>
        <dbReference type="Rhea" id="RHEA:11180"/>
        <dbReference type="Rhea" id="RHEA-COMP:9659"/>
        <dbReference type="Rhea" id="RHEA-COMP:9674"/>
        <dbReference type="ChEBI" id="CHEBI:15378"/>
        <dbReference type="ChEBI" id="CHEBI:30616"/>
        <dbReference type="ChEBI" id="CHEBI:33019"/>
        <dbReference type="ChEBI" id="CHEBI:58048"/>
        <dbReference type="ChEBI" id="CHEBI:78442"/>
        <dbReference type="ChEBI" id="CHEBI:78515"/>
        <dbReference type="ChEBI" id="CHEBI:456215"/>
        <dbReference type="EC" id="6.1.1.22"/>
    </reaction>
</comment>
<comment type="subunit">
    <text evidence="1">Homodimer.</text>
</comment>
<comment type="subcellular location">
    <subcellularLocation>
        <location evidence="1">Cytoplasm</location>
    </subcellularLocation>
</comment>
<comment type="similarity">
    <text evidence="1">Belongs to the class-II aminoacyl-tRNA synthetase family.</text>
</comment>
<keyword id="KW-0030">Aminoacyl-tRNA synthetase</keyword>
<keyword id="KW-0067">ATP-binding</keyword>
<keyword id="KW-0963">Cytoplasm</keyword>
<keyword id="KW-0436">Ligase</keyword>
<keyword id="KW-0547">Nucleotide-binding</keyword>
<keyword id="KW-0648">Protein biosynthesis</keyword>
<evidence type="ECO:0000255" key="1">
    <source>
        <dbReference type="HAMAP-Rule" id="MF_00534"/>
    </source>
</evidence>
<protein>
    <recommendedName>
        <fullName evidence="1">Asparagine--tRNA ligase</fullName>
        <ecNumber evidence="1">6.1.1.22</ecNumber>
    </recommendedName>
    <alternativeName>
        <fullName evidence="1">Asparaginyl-tRNA synthetase</fullName>
        <shortName evidence="1">AsnRS</shortName>
    </alternativeName>
</protein>
<name>SYN_VIBVY</name>
<proteinExistence type="inferred from homology"/>
<sequence length="466" mass="52406">MTYAPVKDVLSGKLAVDSEVTVRGWIRTRRDSKAGISFLAIYDGSCFDPIQAVVPNNLNNYNDEVLKLTTGCSVEVTGKIVASPAAGQAFELAATDVKVVGWVEDADTYPMAKTRHSIEYLREVAHLRPRTNVIGAVARVRHSLSQAIHRFYHEQGYYWLSAPLITASDCEGAGEMFRVSTLDLANLPRTESGDVDFNEDFFGKETFLTVSGQLNGEAYACALSKIYTFGPTFRAENSNTSRHLAEFWMVEPEVAFADLNDIAKLAEDMLKYVFAAVLEERRDDLEFFASRIDKDVINRLEQFVSSDFAQVDYTDAIQILLDSGREFEFPVEWGIDMSSEHERFLAEEHFKAPVIVKNYPKDIKAFYMRMNEDGKTVAAMDVLAPGIGEIIGGSQREERLDVLDARMVEMGIDPEHMNWYRDLRRYGTVPHAGFGLGFERLVSYVTGMGNVRDVIPFPRTPRNANF</sequence>
<gene>
    <name evidence="1" type="primary">asnS</name>
    <name type="ordered locus">VV2090</name>
</gene>
<accession>Q7MJS0</accession>